<reference key="1">
    <citation type="journal article" date="2003" name="PLoS Biol.">
        <title>The genome sequence of Caenorhabditis briggsae: a platform for comparative genomics.</title>
        <authorList>
            <person name="Stein L.D."/>
            <person name="Bao Z."/>
            <person name="Blasiar D."/>
            <person name="Blumenthal T."/>
            <person name="Brent M.R."/>
            <person name="Chen N."/>
            <person name="Chinwalla A."/>
            <person name="Clarke L."/>
            <person name="Clee C."/>
            <person name="Coghlan A."/>
            <person name="Coulson A."/>
            <person name="D'Eustachio P."/>
            <person name="Fitch D.H.A."/>
            <person name="Fulton L.A."/>
            <person name="Fulton R.E."/>
            <person name="Griffiths-Jones S."/>
            <person name="Harris T.W."/>
            <person name="Hillier L.W."/>
            <person name="Kamath R."/>
            <person name="Kuwabara P.E."/>
            <person name="Mardis E.R."/>
            <person name="Marra M.A."/>
            <person name="Miner T.L."/>
            <person name="Minx P."/>
            <person name="Mullikin J.C."/>
            <person name="Plumb R.W."/>
            <person name="Rogers J."/>
            <person name="Schein J.E."/>
            <person name="Sohrmann M."/>
            <person name="Spieth J."/>
            <person name="Stajich J.E."/>
            <person name="Wei C."/>
            <person name="Willey D."/>
            <person name="Wilson R.K."/>
            <person name="Durbin R.M."/>
            <person name="Waterston R.H."/>
        </authorList>
    </citation>
    <scope>NUCLEOTIDE SEQUENCE [LARGE SCALE GENOMIC DNA]</scope>
    <source>
        <strain>AF16</strain>
    </source>
</reference>
<sequence length="213" mass="24979">MNIFRITADLAHAVAIVILLLKIWKSRSCEGISGRSQILFAVTFFTRYLDLFTSFYSLYNTVMKVLFLAGSIGTVYLMWVKFKATYDRNNDTFRIEFLVIPSIILALIINHEFMFMEVMWTFSIYLEAVAIMPQLFMLSRTGNAETITAHYLFALGSYRFLYIFNWVYRYYTESFFDPIAVVAGIVQTVLYADFFYLYITRVIQSNRQFEMSA</sequence>
<evidence type="ECO:0000250" key="1"/>
<evidence type="ECO:0000255" key="2"/>
<evidence type="ECO:0000305" key="3"/>
<accession>Q611C8</accession>
<accession>A8XQN0</accession>
<dbReference type="EMBL" id="HE601483">
    <property type="protein sequence ID" value="CAP34955.1"/>
    <property type="molecule type" value="Genomic_DNA"/>
</dbReference>
<dbReference type="SMR" id="Q611C8"/>
<dbReference type="FunCoup" id="Q611C8">
    <property type="interactions" value="1530"/>
</dbReference>
<dbReference type="STRING" id="6238.Q611C8"/>
<dbReference type="EnsemblMetazoa" id="CBG17162.1">
    <property type="protein sequence ID" value="CBG17162.1"/>
    <property type="gene ID" value="WBGene00036885"/>
</dbReference>
<dbReference type="KEGG" id="cbr:CBG_17162"/>
<dbReference type="CTD" id="8586179"/>
<dbReference type="WormBase" id="CBG17162">
    <property type="protein sequence ID" value="CBP04093"/>
    <property type="gene ID" value="WBGene00036885"/>
    <property type="gene designation" value="Cbr-erd-2.1"/>
</dbReference>
<dbReference type="eggNOG" id="KOG3106">
    <property type="taxonomic scope" value="Eukaryota"/>
</dbReference>
<dbReference type="HOGENOM" id="CLU_057784_0_0_1"/>
<dbReference type="InParanoid" id="Q611C8"/>
<dbReference type="OMA" id="WKSRSCE"/>
<dbReference type="OrthoDB" id="7694678at2759"/>
<dbReference type="Proteomes" id="UP000008549">
    <property type="component" value="Unassembled WGS sequence"/>
</dbReference>
<dbReference type="GO" id="GO:0005801">
    <property type="term" value="C:cis-Golgi network"/>
    <property type="evidence" value="ECO:0000318"/>
    <property type="project" value="GO_Central"/>
</dbReference>
<dbReference type="GO" id="GO:0005783">
    <property type="term" value="C:endoplasmic reticulum"/>
    <property type="evidence" value="ECO:0000318"/>
    <property type="project" value="GO_Central"/>
</dbReference>
<dbReference type="GO" id="GO:0005789">
    <property type="term" value="C:endoplasmic reticulum membrane"/>
    <property type="evidence" value="ECO:0007669"/>
    <property type="project" value="UniProtKB-SubCell"/>
</dbReference>
<dbReference type="GO" id="GO:0046923">
    <property type="term" value="F:ER retention sequence binding"/>
    <property type="evidence" value="ECO:0000318"/>
    <property type="project" value="GO_Central"/>
</dbReference>
<dbReference type="GO" id="GO:0006621">
    <property type="term" value="P:protein retention in ER lumen"/>
    <property type="evidence" value="ECO:0000318"/>
    <property type="project" value="GO_Central"/>
</dbReference>
<dbReference type="GO" id="GO:0015031">
    <property type="term" value="P:protein transport"/>
    <property type="evidence" value="ECO:0007669"/>
    <property type="project" value="UniProtKB-KW"/>
</dbReference>
<dbReference type="GO" id="GO:0016192">
    <property type="term" value="P:vesicle-mediated transport"/>
    <property type="evidence" value="ECO:0007669"/>
    <property type="project" value="UniProtKB-KW"/>
</dbReference>
<dbReference type="InterPro" id="IPR000133">
    <property type="entry name" value="ER_ret_rcpt"/>
</dbReference>
<dbReference type="PANTHER" id="PTHR10585">
    <property type="entry name" value="ER LUMEN PROTEIN RETAINING RECEPTOR"/>
    <property type="match status" value="1"/>
</dbReference>
<dbReference type="Pfam" id="PF00810">
    <property type="entry name" value="ER_lumen_recept"/>
    <property type="match status" value="1"/>
</dbReference>
<dbReference type="PRINTS" id="PR00660">
    <property type="entry name" value="ERLUMENR"/>
</dbReference>
<dbReference type="PROSITE" id="PS00952">
    <property type="entry name" value="ER_LUMEN_RECEPTOR_2"/>
    <property type="match status" value="1"/>
</dbReference>
<gene>
    <name type="primary">erd-2.1</name>
    <name type="ORF">CBG17162</name>
</gene>
<proteinExistence type="inferred from homology"/>
<protein>
    <recommendedName>
        <fullName>ER lumen protein-retaining receptor</fullName>
    </recommendedName>
</protein>
<feature type="chain" id="PRO_0000253584" description="ER lumen protein-retaining receptor">
    <location>
        <begin position="1"/>
        <end position="213"/>
    </location>
</feature>
<feature type="topological domain" description="Lumenal" evidence="2">
    <location>
        <begin position="1"/>
        <end position="2"/>
    </location>
</feature>
<feature type="transmembrane region" description="Helical" evidence="2">
    <location>
        <begin position="3"/>
        <end position="21"/>
    </location>
</feature>
<feature type="topological domain" description="Cytoplasmic" evidence="2">
    <location>
        <begin position="22"/>
        <end position="35"/>
    </location>
</feature>
<feature type="transmembrane region" description="Helical" evidence="2">
    <location>
        <begin position="36"/>
        <end position="53"/>
    </location>
</feature>
<feature type="topological domain" description="Lumenal" evidence="2">
    <location>
        <begin position="54"/>
        <end position="61"/>
    </location>
</feature>
<feature type="transmembrane region" description="Helical" evidence="2">
    <location>
        <begin position="62"/>
        <end position="80"/>
    </location>
</feature>
<feature type="topological domain" description="Cytoplasmic" evidence="2">
    <location>
        <begin position="81"/>
        <end position="96"/>
    </location>
</feature>
<feature type="transmembrane region" description="Helical" evidence="2">
    <location>
        <begin position="97"/>
        <end position="110"/>
    </location>
</feature>
<feature type="topological domain" description="Lumenal" evidence="2">
    <location>
        <begin position="111"/>
        <end position="117"/>
    </location>
</feature>
<feature type="transmembrane region" description="Helical" evidence="2">
    <location>
        <begin position="118"/>
        <end position="137"/>
    </location>
</feature>
<feature type="topological domain" description="Cytoplasmic" evidence="2">
    <location>
        <begin position="138"/>
        <end position="149"/>
    </location>
</feature>
<feature type="transmembrane region" description="Helical" evidence="2">
    <location>
        <begin position="150"/>
        <end position="168"/>
    </location>
</feature>
<feature type="topological domain" description="Lumenal" evidence="2">
    <location>
        <begin position="169"/>
        <end position="178"/>
    </location>
</feature>
<feature type="transmembrane region" description="Helical" evidence="2">
    <location>
        <begin position="179"/>
        <end position="199"/>
    </location>
</feature>
<feature type="topological domain" description="Cytoplasmic" evidence="2">
    <location>
        <begin position="200"/>
        <end position="213"/>
    </location>
</feature>
<name>ERD2_CAEBR</name>
<comment type="function">
    <text evidence="1">Required for the retention of luminal endoplasmic reticulum proteins. Determines the specificity of the luminal ER protein retention system. Also required for normal vesicular traffic through the Golgi (By similarity).</text>
</comment>
<comment type="subcellular location">
    <subcellularLocation>
        <location>Endoplasmic reticulum membrane</location>
        <topology>Multi-pass membrane protein</topology>
    </subcellularLocation>
</comment>
<comment type="similarity">
    <text evidence="3">Belongs to the ERD2 family.</text>
</comment>
<organism>
    <name type="scientific">Caenorhabditis briggsae</name>
    <dbReference type="NCBI Taxonomy" id="6238"/>
    <lineage>
        <taxon>Eukaryota</taxon>
        <taxon>Metazoa</taxon>
        <taxon>Ecdysozoa</taxon>
        <taxon>Nematoda</taxon>
        <taxon>Chromadorea</taxon>
        <taxon>Rhabditida</taxon>
        <taxon>Rhabditina</taxon>
        <taxon>Rhabditomorpha</taxon>
        <taxon>Rhabditoidea</taxon>
        <taxon>Rhabditidae</taxon>
        <taxon>Peloderinae</taxon>
        <taxon>Caenorhabditis</taxon>
    </lineage>
</organism>
<keyword id="KW-0256">Endoplasmic reticulum</keyword>
<keyword id="KW-0931">ER-Golgi transport</keyword>
<keyword id="KW-0472">Membrane</keyword>
<keyword id="KW-0653">Protein transport</keyword>
<keyword id="KW-0675">Receptor</keyword>
<keyword id="KW-1185">Reference proteome</keyword>
<keyword id="KW-0812">Transmembrane</keyword>
<keyword id="KW-1133">Transmembrane helix</keyword>
<keyword id="KW-0813">Transport</keyword>